<feature type="signal peptide" evidence="1">
    <location>
        <begin position="1"/>
        <end position="24"/>
    </location>
</feature>
<feature type="chain" id="PRO_0000019913" description="Nuclease">
    <location>
        <begin position="25"/>
        <end position="274"/>
    </location>
</feature>
<feature type="active site" description="Proton acceptor">
    <location>
        <position position="124"/>
    </location>
</feature>
<feature type="binding site">
    <location>
        <position position="155"/>
    </location>
    <ligand>
        <name>Mn(2+)</name>
        <dbReference type="ChEBI" id="CHEBI:29035"/>
        <label>1</label>
        <note>catalytic</note>
    </ligand>
</feature>
<feature type="binding site" evidence="1">
    <location>
        <position position="246"/>
    </location>
    <ligand>
        <name>Mn(2+)</name>
        <dbReference type="ChEBI" id="CHEBI:29035"/>
        <label>2</label>
    </ligand>
</feature>
<feature type="binding site" evidence="1">
    <location>
        <position position="249"/>
    </location>
    <ligand>
        <name>Mn(2+)</name>
        <dbReference type="ChEBI" id="CHEBI:29035"/>
        <label>2</label>
    </ligand>
</feature>
<feature type="binding site" evidence="1">
    <location>
        <position position="255"/>
    </location>
    <ligand>
        <name>Mn(2+)</name>
        <dbReference type="ChEBI" id="CHEBI:29035"/>
        <label>3</label>
    </ligand>
</feature>
<feature type="binding site" evidence="1">
    <location>
        <position position="256"/>
    </location>
    <ligand>
        <name>Mn(2+)</name>
        <dbReference type="ChEBI" id="CHEBI:29035"/>
        <label>3</label>
    </ligand>
</feature>
<feature type="binding site" evidence="1">
    <location>
        <position position="265"/>
    </location>
    <ligand>
        <name>Mn(2+)</name>
        <dbReference type="ChEBI" id="CHEBI:29035"/>
        <label>3</label>
    </ligand>
</feature>
<feature type="binding site" evidence="1">
    <location>
        <position position="269"/>
    </location>
    <ligand>
        <name>Mn(2+)</name>
        <dbReference type="ChEBI" id="CHEBI:29035"/>
        <label>2</label>
    </ligand>
</feature>
<feature type="mutagenesis site" description="Reduced activity by over 99%.">
    <original>D</original>
    <variation>A</variation>
    <location>
        <position position="121"/>
    </location>
</feature>
<feature type="helix" evidence="4">
    <location>
        <begin position="38"/>
        <end position="40"/>
    </location>
</feature>
<feature type="strand" evidence="4">
    <location>
        <begin position="57"/>
        <end position="61"/>
    </location>
</feature>
<feature type="strand" evidence="4">
    <location>
        <begin position="66"/>
        <end position="70"/>
    </location>
</feature>
<feature type="turn" evidence="4">
    <location>
        <begin position="71"/>
        <end position="74"/>
    </location>
</feature>
<feature type="strand" evidence="4">
    <location>
        <begin position="75"/>
        <end position="84"/>
    </location>
</feature>
<feature type="helix" evidence="4">
    <location>
        <begin position="85"/>
        <end position="87"/>
    </location>
</feature>
<feature type="helix" evidence="4">
    <location>
        <begin position="112"/>
        <end position="114"/>
    </location>
</feature>
<feature type="turn" evidence="4">
    <location>
        <begin position="115"/>
        <end position="117"/>
    </location>
</feature>
<feature type="strand" evidence="4">
    <location>
        <begin position="121"/>
        <end position="126"/>
    </location>
</feature>
<feature type="helix" evidence="4">
    <location>
        <begin position="128"/>
        <end position="130"/>
    </location>
</feature>
<feature type="helix" evidence="4">
    <location>
        <begin position="135"/>
        <end position="140"/>
    </location>
</feature>
<feature type="helix" evidence="4">
    <location>
        <begin position="144"/>
        <end position="146"/>
    </location>
</feature>
<feature type="strand" evidence="4">
    <location>
        <begin position="147"/>
        <end position="150"/>
    </location>
</feature>
<feature type="helix" evidence="4">
    <location>
        <begin position="152"/>
        <end position="156"/>
    </location>
</feature>
<feature type="helix" evidence="4">
    <location>
        <begin position="158"/>
        <end position="171"/>
    </location>
</feature>
<feature type="strand" evidence="4">
    <location>
        <begin position="176"/>
        <end position="184"/>
    </location>
</feature>
<feature type="turn" evidence="4">
    <location>
        <begin position="191"/>
        <end position="193"/>
    </location>
</feature>
<feature type="strand" evidence="4">
    <location>
        <begin position="198"/>
        <end position="206"/>
    </location>
</feature>
<feature type="helix" evidence="4">
    <location>
        <begin position="213"/>
        <end position="216"/>
    </location>
</feature>
<feature type="strand" evidence="4">
    <location>
        <begin position="223"/>
        <end position="229"/>
    </location>
</feature>
<feature type="helix" evidence="4">
    <location>
        <begin position="238"/>
        <end position="241"/>
    </location>
</feature>
<feature type="helix" evidence="4">
    <location>
        <begin position="245"/>
        <end position="252"/>
    </location>
</feature>
<feature type="turn" evidence="4">
    <location>
        <begin position="256"/>
        <end position="259"/>
    </location>
</feature>
<feature type="helix" evidence="4">
    <location>
        <begin position="262"/>
        <end position="270"/>
    </location>
</feature>
<accession>P38446</accession>
<reference key="1">
    <citation type="journal article" date="1992" name="Mol. Microbiol.">
        <title>Identification, genetic analysis and characterization of a sugar-non-specific nuclease from the cyanobacterium Anabaena sp. PCC 7120.</title>
        <authorList>
            <person name="Muro-Pastor A.M."/>
            <person name="Flores E."/>
            <person name="Herrero A."/>
            <person name="Wolk C.P."/>
        </authorList>
    </citation>
    <scope>NUCLEOTIDE SEQUENCE [GENOMIC DNA]</scope>
    <scope>CHARACTERIZATION</scope>
</reference>
<reference key="2">
    <citation type="journal article" date="2001" name="DNA Res.">
        <title>Complete genomic sequence of the filamentous nitrogen-fixing cyanobacterium Anabaena sp. strain PCC 7120.</title>
        <authorList>
            <person name="Kaneko T."/>
            <person name="Nakamura Y."/>
            <person name="Wolk C.P."/>
            <person name="Kuritz T."/>
            <person name="Sasamoto S."/>
            <person name="Watanabe A."/>
            <person name="Iriguchi M."/>
            <person name="Ishikawa A."/>
            <person name="Kawashima K."/>
            <person name="Kimura T."/>
            <person name="Kishida Y."/>
            <person name="Kohara M."/>
            <person name="Matsumoto M."/>
            <person name="Matsuno A."/>
            <person name="Muraki A."/>
            <person name="Nakazaki N."/>
            <person name="Shimpo S."/>
            <person name="Sugimoto M."/>
            <person name="Takazawa M."/>
            <person name="Yamada M."/>
            <person name="Yasuda M."/>
            <person name="Tabata S."/>
        </authorList>
    </citation>
    <scope>NUCLEOTIDE SEQUENCE [LARGE SCALE GENOMIC DNA]</scope>
    <source>
        <strain>PCC 7120 / SAG 25.82 / UTEX 2576</strain>
    </source>
</reference>
<reference key="3">
    <citation type="journal article" date="2005" name="J. Biol. Chem.">
        <title>Structural insights into the mechanism of nuclease A, a betabeta alpha metal nuclease from Anabaena.</title>
        <authorList>
            <person name="Ghosh M."/>
            <person name="Meiss G."/>
            <person name="Pingoud A."/>
            <person name="London R.E."/>
            <person name="Pedersen L.C."/>
        </authorList>
    </citation>
    <scope>X-RAY CRYSTALLOGRAPHY (1.9 ANGSTROMS) OF 25-274 OF MUTANT ALA-121 IN COMPLEX WITH MANGANESE IONS</scope>
    <scope>SUBUNIT</scope>
</reference>
<comment type="function">
    <text>Catalyzes the degradation of both RNA and DNA; has the potential to act as an endonuclease.</text>
</comment>
<comment type="cofactor">
    <cofactor>
        <name>Mn(2+)</name>
        <dbReference type="ChEBI" id="CHEBI:29035"/>
    </cofactor>
    <cofactor>
        <name>Mg(2+)</name>
        <dbReference type="ChEBI" id="CHEBI:18420"/>
    </cofactor>
    <cofactor>
        <name>Ca(2+)</name>
        <dbReference type="ChEBI" id="CHEBI:29108"/>
    </cofactor>
    <cofactor>
        <name>Co(2+)</name>
        <dbReference type="ChEBI" id="CHEBI:48828"/>
    </cofactor>
    <text>Divalent metal cations. The effectiveness of the cations are Mn(2+) &gt; Mg(2+) &gt; Ca(2+) = Co(2+).</text>
</comment>
<comment type="subunit">
    <text evidence="2">Monomer.</text>
</comment>
<comment type="subcellular location">
    <subcellularLocation>
        <location>Periplasm</location>
    </subcellularLocation>
    <text>Periplasmic or loosely attached to the cytoplasmic or the outer membrane.</text>
</comment>
<comment type="PTM">
    <text>The N-terminus is blocked.</text>
</comment>
<comment type="miscellaneous">
    <text>The active site contains 1 hydrated divalent metal cation that has only 1 direct interaction with the protein; all other interactions are via water molecules.</text>
</comment>
<comment type="similarity">
    <text evidence="3">Belongs to the DNA/RNA non-specific endonuclease family.</text>
</comment>
<gene>
    <name type="primary">nucA</name>
    <name type="ordered locus">all7362</name>
</gene>
<geneLocation type="plasmid">
    <name>pCC7120alpha</name>
</geneLocation>
<keyword id="KW-0002">3D-structure</keyword>
<keyword id="KW-0255">Endonuclease</keyword>
<keyword id="KW-0378">Hydrolase</keyword>
<keyword id="KW-0460">Magnesium</keyword>
<keyword id="KW-0464">Manganese</keyword>
<keyword id="KW-0479">Metal-binding</keyword>
<keyword id="KW-0540">Nuclease</keyword>
<keyword id="KW-0574">Periplasm</keyword>
<keyword id="KW-0614">Plasmid</keyword>
<keyword id="KW-1185">Reference proteome</keyword>
<keyword id="KW-0732">Signal</keyword>
<protein>
    <recommendedName>
        <fullName>Nuclease</fullName>
        <ecNumber>3.1.30.-</ecNumber>
    </recommendedName>
    <alternativeName>
        <fullName>Endonuclease</fullName>
    </alternativeName>
</protein>
<dbReference type="EC" id="3.1.30.-"/>
<dbReference type="EMBL" id="X64706">
    <property type="protein sequence ID" value="CAA45962.1"/>
    <property type="molecule type" value="Genomic_DNA"/>
</dbReference>
<dbReference type="EMBL" id="BA000020">
    <property type="protein sequence ID" value="BAB77120.1"/>
    <property type="molecule type" value="Genomic_DNA"/>
</dbReference>
<dbReference type="PIR" id="AB2523">
    <property type="entry name" value="AB2523"/>
</dbReference>
<dbReference type="PIR" id="S28039">
    <property type="entry name" value="S28039"/>
</dbReference>
<dbReference type="RefSeq" id="WP_010999911.1">
    <property type="nucleotide sequence ID" value="NZ_RSCN01000106.1"/>
</dbReference>
<dbReference type="PDB" id="1ZM8">
    <property type="method" value="X-ray"/>
    <property type="resolution" value="1.90 A"/>
    <property type="chains" value="A=25-274"/>
</dbReference>
<dbReference type="PDB" id="2O3B">
    <property type="method" value="X-ray"/>
    <property type="resolution" value="2.30 A"/>
    <property type="chains" value="A=35-274"/>
</dbReference>
<dbReference type="PDBsum" id="1ZM8"/>
<dbReference type="PDBsum" id="2O3B"/>
<dbReference type="SMR" id="P38446"/>
<dbReference type="KEGG" id="ana:all7362"/>
<dbReference type="OrthoDB" id="9811262at2"/>
<dbReference type="EvolutionaryTrace" id="P38446"/>
<dbReference type="Proteomes" id="UP000002483">
    <property type="component" value="Plasmid pCC7120alpha"/>
</dbReference>
<dbReference type="GO" id="GO:0042597">
    <property type="term" value="C:periplasmic space"/>
    <property type="evidence" value="ECO:0007669"/>
    <property type="project" value="UniProtKB-SubCell"/>
</dbReference>
<dbReference type="GO" id="GO:0004519">
    <property type="term" value="F:endonuclease activity"/>
    <property type="evidence" value="ECO:0007669"/>
    <property type="project" value="UniProtKB-KW"/>
</dbReference>
<dbReference type="GO" id="GO:0046872">
    <property type="term" value="F:metal ion binding"/>
    <property type="evidence" value="ECO:0007669"/>
    <property type="project" value="UniProtKB-KW"/>
</dbReference>
<dbReference type="GO" id="GO:0003676">
    <property type="term" value="F:nucleic acid binding"/>
    <property type="evidence" value="ECO:0007669"/>
    <property type="project" value="InterPro"/>
</dbReference>
<dbReference type="CDD" id="cd00091">
    <property type="entry name" value="NUC"/>
    <property type="match status" value="1"/>
</dbReference>
<dbReference type="Gene3D" id="3.40.570.10">
    <property type="entry name" value="Extracellular Endonuclease, subunit A"/>
    <property type="match status" value="1"/>
</dbReference>
<dbReference type="InterPro" id="IPR018524">
    <property type="entry name" value="DNA/RNA_endonuclease_AS"/>
</dbReference>
<dbReference type="InterPro" id="IPR044929">
    <property type="entry name" value="DNA/RNA_non-sp_Endonuclease_sf"/>
</dbReference>
<dbReference type="InterPro" id="IPR001604">
    <property type="entry name" value="Endo_G_ENPP1-like_dom"/>
</dbReference>
<dbReference type="InterPro" id="IPR020821">
    <property type="entry name" value="ENPP1-3/EXOG-like_nuc-like"/>
</dbReference>
<dbReference type="InterPro" id="IPR044925">
    <property type="entry name" value="His-Me_finger_sf"/>
</dbReference>
<dbReference type="InterPro" id="IPR040255">
    <property type="entry name" value="Non-specific_endonuclease"/>
</dbReference>
<dbReference type="PANTHER" id="PTHR13966:SF5">
    <property type="entry name" value="ENDONUCLEASE G, MITOCHONDRIAL"/>
    <property type="match status" value="1"/>
</dbReference>
<dbReference type="PANTHER" id="PTHR13966">
    <property type="entry name" value="ENDONUCLEASE RELATED"/>
    <property type="match status" value="1"/>
</dbReference>
<dbReference type="Pfam" id="PF01223">
    <property type="entry name" value="Endonuclease_NS"/>
    <property type="match status" value="1"/>
</dbReference>
<dbReference type="SMART" id="SM00892">
    <property type="entry name" value="Endonuclease_NS"/>
    <property type="match status" value="1"/>
</dbReference>
<dbReference type="SMART" id="SM00477">
    <property type="entry name" value="NUC"/>
    <property type="match status" value="1"/>
</dbReference>
<dbReference type="SUPFAM" id="SSF54060">
    <property type="entry name" value="His-Me finger endonucleases"/>
    <property type="match status" value="1"/>
</dbReference>
<dbReference type="PROSITE" id="PS01070">
    <property type="entry name" value="NUCLEASE_NON_SPEC"/>
    <property type="match status" value="1"/>
</dbReference>
<name>NUCA_NOSS1</name>
<evidence type="ECO:0000255" key="1"/>
<evidence type="ECO:0000269" key="2">
    <source>
    </source>
</evidence>
<evidence type="ECO:0000305" key="3"/>
<evidence type="ECO:0007829" key="4">
    <source>
        <dbReference type="PDB" id="1ZM8"/>
    </source>
</evidence>
<organism>
    <name type="scientific">Nostoc sp. (strain PCC 7120 / SAG 25.82 / UTEX 2576)</name>
    <dbReference type="NCBI Taxonomy" id="103690"/>
    <lineage>
        <taxon>Bacteria</taxon>
        <taxon>Bacillati</taxon>
        <taxon>Cyanobacteriota</taxon>
        <taxon>Cyanophyceae</taxon>
        <taxon>Nostocales</taxon>
        <taxon>Nostocaceae</taxon>
        <taxon>Nostoc</taxon>
    </lineage>
</organism>
<proteinExistence type="evidence at protein level"/>
<sequence>MGICGKLGVAALVALIVGCSPVQSQVPPLTELSPSISVHLLLGNPSGATPTKLTPDNYLMVKNQYALSYNNSKGTANWVAWQLNSSWLGNAERQDNFRPDKTLPAGWVRVTPSMYSGSGYDRGHIAPSADRTKTTEDNAATFLMTNMMPQTPDNNRNTWGNLEDYCRELVSQGKELYIVAGPNGSLGKPLKGKVTVPKSTWKIVVVLDSPGSGLEGITANTRVIAVNIPNDPELNNDWRAYKVSVDELESLTGYDFLSNVSPNIQTSIESKVDN</sequence>